<reference key="1">
    <citation type="journal article" date="2013" name="Funct. Integr. Genomics">
        <title>Soybean oil biosynthesis: role of diacylglycerol acyltransferases.</title>
        <authorList>
            <person name="Li R."/>
            <person name="Hatanaka T."/>
            <person name="Yu K."/>
            <person name="Wu Y."/>
            <person name="Fukushige H."/>
            <person name="Hildebrand D."/>
        </authorList>
    </citation>
    <scope>NUCLEOTIDE SEQUENCE [MRNA]</scope>
    <scope>FUNCTION</scope>
    <scope>CATALYTIC ACTIVITY</scope>
    <scope>TISSUE SPECIFICITY</scope>
    <scope>DEVELOPMENTAL STAGE</scope>
    <source>
        <strain>cv. Jack</strain>
    </source>
</reference>
<reference key="2">
    <citation type="journal article" date="2010" name="Nature">
        <title>Genome sequence of the palaeopolyploid soybean.</title>
        <authorList>
            <person name="Schmutz J."/>
            <person name="Cannon S.B."/>
            <person name="Schlueter J."/>
            <person name="Ma J."/>
            <person name="Mitros T."/>
            <person name="Nelson W."/>
            <person name="Hyten D.L."/>
            <person name="Song Q."/>
            <person name="Thelen J.J."/>
            <person name="Cheng J."/>
            <person name="Xu D."/>
            <person name="Hellsten U."/>
            <person name="May G.D."/>
            <person name="Yu Y."/>
            <person name="Sakurai T."/>
            <person name="Umezawa T."/>
            <person name="Bhattacharyya M.K."/>
            <person name="Sandhu D."/>
            <person name="Valliyodan B."/>
            <person name="Lindquist E."/>
            <person name="Peto M."/>
            <person name="Grant D."/>
            <person name="Shu S."/>
            <person name="Goodstein D."/>
            <person name="Barry K."/>
            <person name="Futrell-Griggs M."/>
            <person name="Abernathy B."/>
            <person name="Du J."/>
            <person name="Tian Z."/>
            <person name="Zhu L."/>
            <person name="Gill N."/>
            <person name="Joshi T."/>
            <person name="Libault M."/>
            <person name="Sethuraman A."/>
            <person name="Zhang X.-C."/>
            <person name="Shinozaki K."/>
            <person name="Nguyen H.T."/>
            <person name="Wing R.A."/>
            <person name="Cregan P."/>
            <person name="Specht J."/>
            <person name="Grimwood J."/>
            <person name="Rokhsar D."/>
            <person name="Stacey G."/>
            <person name="Shoemaker R.C."/>
            <person name="Jackson S.A."/>
        </authorList>
    </citation>
    <scope>NUCLEOTIDE SEQUENCE [LARGE SCALE GENOMIC DNA]</scope>
    <source>
        <strain>cv. Williams 82</strain>
    </source>
</reference>
<comment type="function">
    <text evidence="5">Major contributors to triacylglycerol (TAG) synthesis and oil accumulation in developing seeds. Catalyzes the acylation of the sn-3 hydroxy group of sn-1,2-diacylglycerol using acyl-CoA. Has a marked preference for oleoyl-CoA and sn-1,2-dioleoylglycerol over vernoloyl-CoA and sn-1,2-divernoloylglycerol.</text>
</comment>
<comment type="catalytic activity">
    <reaction evidence="5">
        <text>an acyl-CoA + a 1,2-diacyl-sn-glycerol = a triacyl-sn-glycerol + CoA</text>
        <dbReference type="Rhea" id="RHEA:10868"/>
        <dbReference type="ChEBI" id="CHEBI:17815"/>
        <dbReference type="ChEBI" id="CHEBI:57287"/>
        <dbReference type="ChEBI" id="CHEBI:58342"/>
        <dbReference type="ChEBI" id="CHEBI:64615"/>
        <dbReference type="EC" id="2.3.1.20"/>
    </reaction>
</comment>
<comment type="pathway">
    <text evidence="7">Glycerolipid metabolism; triacylglycerol biosynthesis.</text>
</comment>
<comment type="subcellular location">
    <subcellularLocation>
        <location evidence="2">Endoplasmic reticulum membrane</location>
        <topology evidence="3">Multi-pass membrane protein</topology>
    </subcellularLocation>
</comment>
<comment type="tissue specificity">
    <text evidence="5">Highly expressed in flowers and pods. Expressed at low levels in roots, stems and leaves.</text>
</comment>
<comment type="developmental stage">
    <text evidence="5">During seed development, expressed from 30 to 65 days after flowering (DAF), with a peak at 50 DAF.</text>
</comment>
<comment type="similarity">
    <text evidence="7">Belongs to the membrane-bound acyltransferase family. Sterol o-acyltransferase subfamily.</text>
</comment>
<evidence type="ECO:0000250" key="1">
    <source>
        <dbReference type="UniProtKB" id="O75907"/>
    </source>
</evidence>
<evidence type="ECO:0000250" key="2">
    <source>
        <dbReference type="UniProtKB" id="Q5GKZ7"/>
    </source>
</evidence>
<evidence type="ECO:0000255" key="3"/>
<evidence type="ECO:0000256" key="4">
    <source>
        <dbReference type="SAM" id="MobiDB-lite"/>
    </source>
</evidence>
<evidence type="ECO:0000269" key="5">
    <source>
    </source>
</evidence>
<evidence type="ECO:0000303" key="6">
    <source>
    </source>
</evidence>
<evidence type="ECO:0000305" key="7"/>
<evidence type="ECO:0000312" key="8">
    <source>
        <dbReference type="EMBL" id="KRH02683.1"/>
    </source>
</evidence>
<organism>
    <name type="scientific">Glycine max</name>
    <name type="common">Soybean</name>
    <name type="synonym">Glycine hispida</name>
    <dbReference type="NCBI Taxonomy" id="3847"/>
    <lineage>
        <taxon>Eukaryota</taxon>
        <taxon>Viridiplantae</taxon>
        <taxon>Streptophyta</taxon>
        <taxon>Embryophyta</taxon>
        <taxon>Tracheophyta</taxon>
        <taxon>Spermatophyta</taxon>
        <taxon>Magnoliopsida</taxon>
        <taxon>eudicotyledons</taxon>
        <taxon>Gunneridae</taxon>
        <taxon>Pentapetalae</taxon>
        <taxon>rosids</taxon>
        <taxon>fabids</taxon>
        <taxon>Fabales</taxon>
        <taxon>Fabaceae</taxon>
        <taxon>Papilionoideae</taxon>
        <taxon>50 kb inversion clade</taxon>
        <taxon>NPAAA clade</taxon>
        <taxon>indigoferoid/millettioid clade</taxon>
        <taxon>Phaseoleae</taxon>
        <taxon>Glycine</taxon>
        <taxon>Glycine subgen. Soja</taxon>
    </lineage>
</organism>
<gene>
    <name evidence="6" type="primary">DGAT1B</name>
    <name evidence="8" type="ordered locus">Glyma17g053300</name>
</gene>
<protein>
    <recommendedName>
        <fullName evidence="7">Diacylglycerol O-acyltransferase 1B</fullName>
        <shortName evidence="6">GmDGAT1B</shortName>
        <ecNumber evidence="5">2.3.1.20</ecNumber>
    </recommendedName>
</protein>
<accession>I1MSF2</accession>
<accession>Q1MW30</accession>
<proteinExistence type="evidence at protein level"/>
<feature type="chain" id="PRO_0000438906" description="Diacylglycerol O-acyltransferase 1B">
    <location>
        <begin position="1"/>
        <end position="504"/>
    </location>
</feature>
<feature type="transmembrane region" description="Helical" evidence="3">
    <location>
        <begin position="108"/>
        <end position="128"/>
    </location>
</feature>
<feature type="transmembrane region" description="Helical" evidence="3">
    <location>
        <begin position="152"/>
        <end position="172"/>
    </location>
</feature>
<feature type="transmembrane region" description="Helical" evidence="3">
    <location>
        <begin position="184"/>
        <end position="204"/>
    </location>
</feature>
<feature type="transmembrane region" description="Helical" evidence="3">
    <location>
        <begin position="209"/>
        <end position="229"/>
    </location>
</feature>
<feature type="transmembrane region" description="Helical" evidence="3">
    <location>
        <begin position="259"/>
        <end position="279"/>
    </location>
</feature>
<feature type="transmembrane region" description="Helical" evidence="3">
    <location>
        <begin position="301"/>
        <end position="321"/>
    </location>
</feature>
<feature type="transmembrane region" description="Helical" evidence="3">
    <location>
        <begin position="348"/>
        <end position="368"/>
    </location>
</feature>
<feature type="transmembrane region" description="Helical" evidence="3">
    <location>
        <begin position="416"/>
        <end position="436"/>
    </location>
</feature>
<feature type="transmembrane region" description="Helical" evidence="3">
    <location>
        <begin position="438"/>
        <end position="458"/>
    </location>
</feature>
<feature type="transmembrane region" description="Helical" evidence="3">
    <location>
        <begin position="471"/>
        <end position="491"/>
    </location>
</feature>
<feature type="region of interest" description="Disordered" evidence="4">
    <location>
        <begin position="1"/>
        <end position="72"/>
    </location>
</feature>
<feature type="short sequence motif" description="FYXDWWN motif" evidence="1">
    <location>
        <begin position="375"/>
        <end position="381"/>
    </location>
</feature>
<feature type="compositionally biased region" description="Polar residues" evidence="4">
    <location>
        <begin position="24"/>
        <end position="41"/>
    </location>
</feature>
<feature type="compositionally biased region" description="Low complexity" evidence="4">
    <location>
        <begin position="53"/>
        <end position="65"/>
    </location>
</feature>
<feature type="active site" evidence="1">
    <location>
        <position position="430"/>
    </location>
</feature>
<feature type="sequence conflict" description="In Ref. 1; BAE93461." evidence="7" ref="1">
    <original>F</original>
    <variation>Y</variation>
    <location>
        <position position="406"/>
    </location>
</feature>
<name>DAT1B_SOYBN</name>
<sequence>MAISDEPESVATALNHSSLRRRPSATSTAGLFNSPETTTDSSGDDLAKDSGSDDSINSDDAAVNSQQQNEKQDTDFSVLKFAYRPSVPAHRKVKESPLSSDTIFRQSHAGLFNLCIVVLVAVNSRLIIENLMKYGWLIKSGFWFSSKSLRDWPLFMCCLSLVVFPFAAFIVEKLAQRKCIPEPVVVVLHIIITSTSLFYPVLVILRCDSAFVSGVTLMLFSCVVWLKLVSYAHTNYDMRALTKLVEKGEALLDTLNMDYPYNVSFKSLAYFLVAPTLCYQPSYPRTPYIRKGWLFRQLVKLIIFTGVMGFIIEQYINPIVQNSQHPLKGNLLYATERVLKLSVPNLYVWLCMFYCFFHLWLNILAELLRFGDREFYKDWWNAKTVEDYWRMWNMPVHKWMIRHLYFPCLRHGLPKAAALLIAFLVSALFHELCIAVPCHIFKLWAFGGIMFQVPLVLITNYLQNKFRNSMVGNMIFWFIFSILGQPMCVLLYYHDLMNRKGKLD</sequence>
<keyword id="KW-0012">Acyltransferase</keyword>
<keyword id="KW-0256">Endoplasmic reticulum</keyword>
<keyword id="KW-0319">Glycerol metabolism</keyword>
<keyword id="KW-0444">Lipid biosynthesis</keyword>
<keyword id="KW-0443">Lipid metabolism</keyword>
<keyword id="KW-0472">Membrane</keyword>
<keyword id="KW-1185">Reference proteome</keyword>
<keyword id="KW-0808">Transferase</keyword>
<keyword id="KW-0812">Transmembrane</keyword>
<keyword id="KW-1133">Transmembrane helix</keyword>
<dbReference type="EC" id="2.3.1.20" evidence="5"/>
<dbReference type="EMBL" id="AB257590">
    <property type="protein sequence ID" value="BAE93461.1"/>
    <property type="molecule type" value="mRNA"/>
</dbReference>
<dbReference type="EMBL" id="CM000850">
    <property type="protein sequence ID" value="KRH02683.1"/>
    <property type="molecule type" value="Genomic_DNA"/>
</dbReference>
<dbReference type="RefSeq" id="NP_001237684.1">
    <property type="nucleotide sequence ID" value="NM_001250755.1"/>
</dbReference>
<dbReference type="SMR" id="I1MSF2"/>
<dbReference type="FunCoup" id="I1MSF2">
    <property type="interactions" value="2714"/>
</dbReference>
<dbReference type="STRING" id="3847.I1MSF2"/>
<dbReference type="PaxDb" id="3847-GLYMA17G06120.1"/>
<dbReference type="EnsemblPlants" id="KRH02683">
    <property type="protein sequence ID" value="KRH02683"/>
    <property type="gene ID" value="GLYMA_17G053300"/>
</dbReference>
<dbReference type="GeneID" id="732606"/>
<dbReference type="Gramene" id="KRH02683">
    <property type="protein sequence ID" value="KRH02683"/>
    <property type="gene ID" value="GLYMA_17G053300"/>
</dbReference>
<dbReference type="KEGG" id="gmx:732606"/>
<dbReference type="eggNOG" id="KOG0380">
    <property type="taxonomic scope" value="Eukaryota"/>
</dbReference>
<dbReference type="HOGENOM" id="CLU_018190_0_1_1"/>
<dbReference type="InParanoid" id="I1MSF2"/>
<dbReference type="OMA" id="WCRERTH"/>
<dbReference type="OrthoDB" id="10039049at2759"/>
<dbReference type="BRENDA" id="2.3.1.20">
    <property type="organism ID" value="2483"/>
</dbReference>
<dbReference type="UniPathway" id="UPA00282"/>
<dbReference type="Proteomes" id="UP000008827">
    <property type="component" value="Chromosome 17"/>
</dbReference>
<dbReference type="GO" id="GO:0009941">
    <property type="term" value="C:chloroplast envelope"/>
    <property type="evidence" value="ECO:0000318"/>
    <property type="project" value="GO_Central"/>
</dbReference>
<dbReference type="GO" id="GO:0005789">
    <property type="term" value="C:endoplasmic reticulum membrane"/>
    <property type="evidence" value="ECO:0000250"/>
    <property type="project" value="UniProtKB"/>
</dbReference>
<dbReference type="GO" id="GO:0004144">
    <property type="term" value="F:diacylglycerol O-acyltransferase activity"/>
    <property type="evidence" value="ECO:0000314"/>
    <property type="project" value="UniProtKB"/>
</dbReference>
<dbReference type="GO" id="GO:0006071">
    <property type="term" value="P:glycerol metabolic process"/>
    <property type="evidence" value="ECO:0007669"/>
    <property type="project" value="UniProtKB-KW"/>
</dbReference>
<dbReference type="GO" id="GO:0019432">
    <property type="term" value="P:triglyceride biosynthetic process"/>
    <property type="evidence" value="ECO:0000314"/>
    <property type="project" value="UniProtKB"/>
</dbReference>
<dbReference type="InterPro" id="IPR027251">
    <property type="entry name" value="Diacylglycerol_acylTrfase1"/>
</dbReference>
<dbReference type="InterPro" id="IPR004299">
    <property type="entry name" value="MBOAT_fam"/>
</dbReference>
<dbReference type="InterPro" id="IPR014371">
    <property type="entry name" value="Oat_ACAT_DAG_ARE"/>
</dbReference>
<dbReference type="PANTHER" id="PTHR10408:SF22">
    <property type="entry name" value="DIACYLGLYCEROL O-ACYLTRANSFERASE 1A"/>
    <property type="match status" value="1"/>
</dbReference>
<dbReference type="PANTHER" id="PTHR10408">
    <property type="entry name" value="STEROL O-ACYLTRANSFERASE"/>
    <property type="match status" value="1"/>
</dbReference>
<dbReference type="Pfam" id="PF03062">
    <property type="entry name" value="MBOAT"/>
    <property type="match status" value="1"/>
</dbReference>
<dbReference type="PIRSF" id="PIRSF000439">
    <property type="entry name" value="Oat_ACAT_DAG_ARE"/>
    <property type="match status" value="1"/>
</dbReference>
<dbReference type="PIRSF" id="PIRSF500231">
    <property type="entry name" value="Oat_dag"/>
    <property type="match status" value="1"/>
</dbReference>